<gene>
    <name evidence="1" type="primary">ruvA</name>
    <name type="ordered locus">SeSA_A2049</name>
</gene>
<dbReference type="EMBL" id="CP001127">
    <property type="protein sequence ID" value="ACF90739.1"/>
    <property type="molecule type" value="Genomic_DNA"/>
</dbReference>
<dbReference type="RefSeq" id="WP_000580333.1">
    <property type="nucleotide sequence ID" value="NC_011094.1"/>
</dbReference>
<dbReference type="SMR" id="B4TYR8"/>
<dbReference type="KEGG" id="sew:SeSA_A2049"/>
<dbReference type="HOGENOM" id="CLU_087936_0_0_6"/>
<dbReference type="Proteomes" id="UP000001865">
    <property type="component" value="Chromosome"/>
</dbReference>
<dbReference type="GO" id="GO:0005737">
    <property type="term" value="C:cytoplasm"/>
    <property type="evidence" value="ECO:0007669"/>
    <property type="project" value="UniProtKB-SubCell"/>
</dbReference>
<dbReference type="GO" id="GO:0009379">
    <property type="term" value="C:Holliday junction helicase complex"/>
    <property type="evidence" value="ECO:0007669"/>
    <property type="project" value="InterPro"/>
</dbReference>
<dbReference type="GO" id="GO:0048476">
    <property type="term" value="C:Holliday junction resolvase complex"/>
    <property type="evidence" value="ECO:0007669"/>
    <property type="project" value="UniProtKB-UniRule"/>
</dbReference>
<dbReference type="GO" id="GO:0005524">
    <property type="term" value="F:ATP binding"/>
    <property type="evidence" value="ECO:0007669"/>
    <property type="project" value="InterPro"/>
</dbReference>
<dbReference type="GO" id="GO:0000400">
    <property type="term" value="F:four-way junction DNA binding"/>
    <property type="evidence" value="ECO:0007669"/>
    <property type="project" value="UniProtKB-UniRule"/>
</dbReference>
<dbReference type="GO" id="GO:0009378">
    <property type="term" value="F:four-way junction helicase activity"/>
    <property type="evidence" value="ECO:0007669"/>
    <property type="project" value="InterPro"/>
</dbReference>
<dbReference type="GO" id="GO:0006310">
    <property type="term" value="P:DNA recombination"/>
    <property type="evidence" value="ECO:0007669"/>
    <property type="project" value="UniProtKB-UniRule"/>
</dbReference>
<dbReference type="GO" id="GO:0006281">
    <property type="term" value="P:DNA repair"/>
    <property type="evidence" value="ECO:0007669"/>
    <property type="project" value="UniProtKB-UniRule"/>
</dbReference>
<dbReference type="CDD" id="cd14332">
    <property type="entry name" value="UBA_RuvA_C"/>
    <property type="match status" value="1"/>
</dbReference>
<dbReference type="FunFam" id="1.10.150.20:FF:000012">
    <property type="entry name" value="Holliday junction ATP-dependent DNA helicase RuvA"/>
    <property type="match status" value="1"/>
</dbReference>
<dbReference type="FunFam" id="1.10.8.10:FF:000008">
    <property type="entry name" value="Holliday junction ATP-dependent DNA helicase RuvA"/>
    <property type="match status" value="1"/>
</dbReference>
<dbReference type="FunFam" id="2.40.50.140:FF:000083">
    <property type="entry name" value="Holliday junction ATP-dependent DNA helicase RuvA"/>
    <property type="match status" value="1"/>
</dbReference>
<dbReference type="Gene3D" id="1.10.150.20">
    <property type="entry name" value="5' to 3' exonuclease, C-terminal subdomain"/>
    <property type="match status" value="1"/>
</dbReference>
<dbReference type="Gene3D" id="1.10.8.10">
    <property type="entry name" value="DNA helicase RuvA subunit, C-terminal domain"/>
    <property type="match status" value="1"/>
</dbReference>
<dbReference type="Gene3D" id="2.40.50.140">
    <property type="entry name" value="Nucleic acid-binding proteins"/>
    <property type="match status" value="1"/>
</dbReference>
<dbReference type="HAMAP" id="MF_00031">
    <property type="entry name" value="DNA_HJ_migration_RuvA"/>
    <property type="match status" value="1"/>
</dbReference>
<dbReference type="InterPro" id="IPR013849">
    <property type="entry name" value="DNA_helicase_Holl-junc_RuvA_I"/>
</dbReference>
<dbReference type="InterPro" id="IPR003583">
    <property type="entry name" value="Hlx-hairpin-Hlx_DNA-bd_motif"/>
</dbReference>
<dbReference type="InterPro" id="IPR012340">
    <property type="entry name" value="NA-bd_OB-fold"/>
</dbReference>
<dbReference type="InterPro" id="IPR000085">
    <property type="entry name" value="RuvA"/>
</dbReference>
<dbReference type="InterPro" id="IPR010994">
    <property type="entry name" value="RuvA_2-like"/>
</dbReference>
<dbReference type="InterPro" id="IPR011114">
    <property type="entry name" value="RuvA_C"/>
</dbReference>
<dbReference type="InterPro" id="IPR036267">
    <property type="entry name" value="RuvA_C_sf"/>
</dbReference>
<dbReference type="NCBIfam" id="TIGR00084">
    <property type="entry name" value="ruvA"/>
    <property type="match status" value="1"/>
</dbReference>
<dbReference type="Pfam" id="PF14520">
    <property type="entry name" value="HHH_5"/>
    <property type="match status" value="1"/>
</dbReference>
<dbReference type="Pfam" id="PF07499">
    <property type="entry name" value="RuvA_C"/>
    <property type="match status" value="1"/>
</dbReference>
<dbReference type="Pfam" id="PF01330">
    <property type="entry name" value="RuvA_N"/>
    <property type="match status" value="1"/>
</dbReference>
<dbReference type="SMART" id="SM00278">
    <property type="entry name" value="HhH1"/>
    <property type="match status" value="2"/>
</dbReference>
<dbReference type="SUPFAM" id="SSF46929">
    <property type="entry name" value="DNA helicase RuvA subunit, C-terminal domain"/>
    <property type="match status" value="1"/>
</dbReference>
<dbReference type="SUPFAM" id="SSF50249">
    <property type="entry name" value="Nucleic acid-binding proteins"/>
    <property type="match status" value="1"/>
</dbReference>
<dbReference type="SUPFAM" id="SSF47781">
    <property type="entry name" value="RuvA domain 2-like"/>
    <property type="match status" value="1"/>
</dbReference>
<organism>
    <name type="scientific">Salmonella schwarzengrund (strain CVM19633)</name>
    <dbReference type="NCBI Taxonomy" id="439843"/>
    <lineage>
        <taxon>Bacteria</taxon>
        <taxon>Pseudomonadati</taxon>
        <taxon>Pseudomonadota</taxon>
        <taxon>Gammaproteobacteria</taxon>
        <taxon>Enterobacterales</taxon>
        <taxon>Enterobacteriaceae</taxon>
        <taxon>Salmonella</taxon>
    </lineage>
</organism>
<comment type="function">
    <text evidence="1">The RuvA-RuvB-RuvC complex processes Holliday junction (HJ) DNA during genetic recombination and DNA repair, while the RuvA-RuvB complex plays an important role in the rescue of blocked DNA replication forks via replication fork reversal (RFR). RuvA specifically binds to HJ cruciform DNA, conferring on it an open structure. The RuvB hexamer acts as an ATP-dependent pump, pulling dsDNA into and through the RuvAB complex. HJ branch migration allows RuvC to scan DNA until it finds its consensus sequence, where it cleaves and resolves the cruciform DNA.</text>
</comment>
<comment type="subunit">
    <text evidence="1">Homotetramer. Forms an RuvA(8)-RuvB(12)-Holliday junction (HJ) complex. HJ DNA is sandwiched between 2 RuvA tetramers; dsDNA enters through RuvA and exits via RuvB. An RuvB hexamer assembles on each DNA strand where it exits the tetramer. Each RuvB hexamer is contacted by two RuvA subunits (via domain III) on 2 adjacent RuvB subunits; this complex drives branch migration. In the full resolvosome a probable DNA-RuvA(4)-RuvB(12)-RuvC(2) complex forms which resolves the HJ.</text>
</comment>
<comment type="subcellular location">
    <subcellularLocation>
        <location evidence="1">Cytoplasm</location>
    </subcellularLocation>
</comment>
<comment type="domain">
    <text evidence="1">Has three domains with a flexible linker between the domains II and III and assumes an 'L' shape. Domain III is highly mobile and contacts RuvB.</text>
</comment>
<comment type="similarity">
    <text evidence="1">Belongs to the RuvA family.</text>
</comment>
<protein>
    <recommendedName>
        <fullName evidence="1">Holliday junction branch migration complex subunit RuvA</fullName>
    </recommendedName>
</protein>
<proteinExistence type="inferred from homology"/>
<evidence type="ECO:0000255" key="1">
    <source>
        <dbReference type="HAMAP-Rule" id="MF_00031"/>
    </source>
</evidence>
<reference key="1">
    <citation type="journal article" date="2011" name="J. Bacteriol.">
        <title>Comparative genomics of 28 Salmonella enterica isolates: evidence for CRISPR-mediated adaptive sublineage evolution.</title>
        <authorList>
            <person name="Fricke W.F."/>
            <person name="Mammel M.K."/>
            <person name="McDermott P.F."/>
            <person name="Tartera C."/>
            <person name="White D.G."/>
            <person name="Leclerc J.E."/>
            <person name="Ravel J."/>
            <person name="Cebula T.A."/>
        </authorList>
    </citation>
    <scope>NUCLEOTIDE SEQUENCE [LARGE SCALE GENOMIC DNA]</scope>
    <source>
        <strain>CVM19633</strain>
    </source>
</reference>
<name>RUVA_SALSV</name>
<sequence>MIGRLRGIILEKQPPIVLLETGGVGYEVHMPMTCFYELPEAGQEAIVFTHFVVREDAQLLYGFNNKQERTLFKELIKTNGVGPKLALAILSGMSAQQFVNAVEREELGALVKLPGIGKKTAERLIVEMKDRFKGLHGDLFTPAVDLVLTSPASPGSEDAEQEAVAALVALGYKPQEASRMVSKIARPDASSETLIRDALRAAL</sequence>
<keyword id="KW-0963">Cytoplasm</keyword>
<keyword id="KW-0227">DNA damage</keyword>
<keyword id="KW-0233">DNA recombination</keyword>
<keyword id="KW-0234">DNA repair</keyword>
<keyword id="KW-0238">DNA-binding</keyword>
<feature type="chain" id="PRO_1000090368" description="Holliday junction branch migration complex subunit RuvA">
    <location>
        <begin position="1"/>
        <end position="203"/>
    </location>
</feature>
<feature type="region of interest" description="Domain I" evidence="1">
    <location>
        <begin position="1"/>
        <end position="64"/>
    </location>
</feature>
<feature type="region of interest" description="Domain II" evidence="1">
    <location>
        <begin position="65"/>
        <end position="142"/>
    </location>
</feature>
<feature type="region of interest" description="Flexible linker" evidence="1">
    <location>
        <begin position="143"/>
        <end position="154"/>
    </location>
</feature>
<feature type="region of interest" description="Domain III" evidence="1">
    <location>
        <begin position="155"/>
        <end position="203"/>
    </location>
</feature>
<accession>B4TYR8</accession>